<feature type="chain" id="PRO_0000369277" description="Cytoplasmic tRNA 2-thiolation protein 2">
    <location>
        <begin position="1"/>
        <end position="405"/>
    </location>
</feature>
<dbReference type="EMBL" id="CM000361">
    <property type="protein sequence ID" value="EDX05521.1"/>
    <property type="molecule type" value="Genomic_DNA"/>
</dbReference>
<dbReference type="SMR" id="B4Q9Z1"/>
<dbReference type="STRING" id="7240.B4Q9Z1"/>
<dbReference type="EnsemblMetazoa" id="FBtr0221664">
    <property type="protein sequence ID" value="FBpp0220156"/>
    <property type="gene ID" value="FBgn0193176"/>
</dbReference>
<dbReference type="EnsemblMetazoa" id="XM_002079900.4">
    <property type="protein sequence ID" value="XP_002079936.1"/>
    <property type="gene ID" value="LOC6732823"/>
</dbReference>
<dbReference type="GeneID" id="6732823"/>
<dbReference type="CTD" id="348180"/>
<dbReference type="HOGENOM" id="CLU_024534_2_1_1"/>
<dbReference type="OMA" id="CHACRNI"/>
<dbReference type="OrthoDB" id="25129at2759"/>
<dbReference type="PhylomeDB" id="B4Q9Z1"/>
<dbReference type="UniPathway" id="UPA00988"/>
<dbReference type="Proteomes" id="UP000000304">
    <property type="component" value="Chromosome 2L"/>
</dbReference>
<dbReference type="Bgee" id="FBgn0193176">
    <property type="expression patterns" value="Expressed in embryo and 3 other cell types or tissues"/>
</dbReference>
<dbReference type="GO" id="GO:0005829">
    <property type="term" value="C:cytosol"/>
    <property type="evidence" value="ECO:0000250"/>
    <property type="project" value="UniProtKB"/>
</dbReference>
<dbReference type="GO" id="GO:0016779">
    <property type="term" value="F:nucleotidyltransferase activity"/>
    <property type="evidence" value="ECO:0007669"/>
    <property type="project" value="UniProtKB-UniRule"/>
</dbReference>
<dbReference type="GO" id="GO:0016783">
    <property type="term" value="F:sulfurtransferase activity"/>
    <property type="evidence" value="ECO:0007669"/>
    <property type="project" value="TreeGrafter"/>
</dbReference>
<dbReference type="GO" id="GO:0000049">
    <property type="term" value="F:tRNA binding"/>
    <property type="evidence" value="ECO:0007669"/>
    <property type="project" value="InterPro"/>
</dbReference>
<dbReference type="GO" id="GO:0032447">
    <property type="term" value="P:protein urmylation"/>
    <property type="evidence" value="ECO:0007669"/>
    <property type="project" value="UniProtKB-UniRule"/>
</dbReference>
<dbReference type="GO" id="GO:0034227">
    <property type="term" value="P:tRNA thio-modification"/>
    <property type="evidence" value="ECO:0000250"/>
    <property type="project" value="UniProtKB"/>
</dbReference>
<dbReference type="GO" id="GO:0002143">
    <property type="term" value="P:tRNA wobble position uridine thiolation"/>
    <property type="evidence" value="ECO:0007669"/>
    <property type="project" value="TreeGrafter"/>
</dbReference>
<dbReference type="GO" id="GO:0002098">
    <property type="term" value="P:tRNA wobble uridine modification"/>
    <property type="evidence" value="ECO:0000250"/>
    <property type="project" value="UniProtKB"/>
</dbReference>
<dbReference type="FunFam" id="3.40.50.620:FF:000229">
    <property type="entry name" value="Cytoplasmic tRNA 2-thiolation protein 2"/>
    <property type="match status" value="1"/>
</dbReference>
<dbReference type="Gene3D" id="3.40.50.620">
    <property type="entry name" value="HUPs"/>
    <property type="match status" value="1"/>
</dbReference>
<dbReference type="HAMAP" id="MF_03054">
    <property type="entry name" value="CTU2"/>
    <property type="match status" value="1"/>
</dbReference>
<dbReference type="InterPro" id="IPR019407">
    <property type="entry name" value="CTU2"/>
</dbReference>
<dbReference type="InterPro" id="IPR014729">
    <property type="entry name" value="Rossmann-like_a/b/a_fold"/>
</dbReference>
<dbReference type="PANTHER" id="PTHR20882">
    <property type="entry name" value="CYTOPLASMIC TRNA 2-THIOLATION PROTEIN 2"/>
    <property type="match status" value="1"/>
</dbReference>
<dbReference type="PANTHER" id="PTHR20882:SF14">
    <property type="entry name" value="CYTOPLASMIC TRNA 2-THIOLATION PROTEIN 2"/>
    <property type="match status" value="1"/>
</dbReference>
<dbReference type="Pfam" id="PF10288">
    <property type="entry name" value="CTU2"/>
    <property type="match status" value="1"/>
</dbReference>
<dbReference type="SUPFAM" id="SSF52402">
    <property type="entry name" value="Adenine nucleotide alpha hydrolases-like"/>
    <property type="match status" value="1"/>
</dbReference>
<organism>
    <name type="scientific">Drosophila simulans</name>
    <name type="common">Fruit fly</name>
    <dbReference type="NCBI Taxonomy" id="7240"/>
    <lineage>
        <taxon>Eukaryota</taxon>
        <taxon>Metazoa</taxon>
        <taxon>Ecdysozoa</taxon>
        <taxon>Arthropoda</taxon>
        <taxon>Hexapoda</taxon>
        <taxon>Insecta</taxon>
        <taxon>Pterygota</taxon>
        <taxon>Neoptera</taxon>
        <taxon>Endopterygota</taxon>
        <taxon>Diptera</taxon>
        <taxon>Brachycera</taxon>
        <taxon>Muscomorpha</taxon>
        <taxon>Ephydroidea</taxon>
        <taxon>Drosophilidae</taxon>
        <taxon>Drosophila</taxon>
        <taxon>Sophophora</taxon>
    </lineage>
</organism>
<comment type="function">
    <text evidence="1">Plays a central role in 2-thiolation of mcm(5)S(2)U at tRNA wobble positions of tRNA(Lys), tRNA(Glu) and tRNA(Gln). May act by forming a heterodimer with NCS6/CTU1 that ligates sulfur from thiocarboxylated URM1 onto the uridine of tRNAs at wobble position.</text>
</comment>
<comment type="pathway">
    <text evidence="1">tRNA modification; 5-methoxycarbonylmethyl-2-thiouridine-tRNA biosynthesis.</text>
</comment>
<comment type="subcellular location">
    <subcellularLocation>
        <location evidence="1">Cytoplasm</location>
    </subcellularLocation>
</comment>
<comment type="similarity">
    <text evidence="1">Belongs to the CTU2/NCS2 family.</text>
</comment>
<keyword id="KW-0963">Cytoplasm</keyword>
<keyword id="KW-1185">Reference proteome</keyword>
<keyword id="KW-0819">tRNA processing</keyword>
<reference key="1">
    <citation type="journal article" date="2007" name="Nature">
        <title>Evolution of genes and genomes on the Drosophila phylogeny.</title>
        <authorList>
            <consortium name="Drosophila 12 genomes consortium"/>
        </authorList>
    </citation>
    <scope>NUCLEOTIDE SEQUENCE [LARGE SCALE GENOMIC DNA]</scope>
</reference>
<name>CTU2_DROSI</name>
<evidence type="ECO:0000255" key="1">
    <source>
        <dbReference type="HAMAP-Rule" id="MF_03054"/>
    </source>
</evidence>
<protein>
    <recommendedName>
        <fullName evidence="1">Cytoplasmic tRNA 2-thiolation protein 2</fullName>
    </recommendedName>
</protein>
<proteinExistence type="inferred from homology"/>
<gene>
    <name type="ORF">GD21754</name>
</gene>
<accession>B4Q9Z1</accession>
<sequence length="405" mass="44798">MCSIGEDDFGDDGAAHAMAVESLPLGIVLSPGNCSKCDVNSDELYKLNFRTAECRECFLAYARHKFRAALGAAKILPRNAEVLLVLDGSAESLVLLDMLHFAQTQNTFKRLHCNARVVYVEEQQVQGRDPVHLEALQNLSTQYAPFDFYVIELGALPSSMQRIKDYSPSLNANNELIHKLQKLRSLTARQDYLQQQRKNLICSVAQCLRCTHVFESNISVDLATQLLTAIALGRGGSAALDVALLDDRLSGDVKLLRPLKDLNEQEIQFYIHAQRLKPLFQKGSRYGREHGQTASLQNLTSAFVANLQQNYASTVSTVFRTGDKIAANSNPEQSSCVHCRSTLDTELSDTLLAIEYSRSVSEAGVSLYKSGQDLEDLAKKRLENKDGLCHACRAIQAELDSGNLL</sequence>